<sequence>MRVYYDRDCDVNLIKDKKIAMLGYGSQGHAHALNLRDSGAKNLVVALREGSASAKKAEAEGLKVMGIAEAAAWADLIMFTMPDELQAETYRKYVHDNLREGAAIAFAHGLNVHFGLIEPKPGVDVIMMAPKGPGHTVRGEYTKGGGVPCLVAVHQDATGKAMDIGLSYCSAIGGGRSGIIETNFRQECETDLFGEQAVLCGGLVELIRMGFETLVEAGYEPEMAYFECLHEVKLIVDLIYEGGIANMNYSISNTAEYGEYVSGPRVLPYEETKARMKAVLTDIQTGKFVRDFMQENAVGQPFFKATRRINDEHQIEKVGEKLRGMMPWISKGKMVDKERN</sequence>
<organism>
    <name type="scientific">Paracoccus denitrificans (strain Pd 1222)</name>
    <dbReference type="NCBI Taxonomy" id="318586"/>
    <lineage>
        <taxon>Bacteria</taxon>
        <taxon>Pseudomonadati</taxon>
        <taxon>Pseudomonadota</taxon>
        <taxon>Alphaproteobacteria</taxon>
        <taxon>Rhodobacterales</taxon>
        <taxon>Paracoccaceae</taxon>
        <taxon>Paracoccus</taxon>
    </lineage>
</organism>
<name>ILVC_PARDP</name>
<protein>
    <recommendedName>
        <fullName evidence="1">Ketol-acid reductoisomerase (NADP(+))</fullName>
        <shortName evidence="1">KARI</shortName>
        <ecNumber evidence="1">1.1.1.86</ecNumber>
    </recommendedName>
    <alternativeName>
        <fullName evidence="1">Acetohydroxy-acid isomeroreductase</fullName>
        <shortName evidence="1">AHIR</shortName>
    </alternativeName>
    <alternativeName>
        <fullName evidence="1">Alpha-keto-beta-hydroxylacyl reductoisomerase</fullName>
    </alternativeName>
    <alternativeName>
        <fullName evidence="1">Ketol-acid reductoisomerase type 1</fullName>
    </alternativeName>
    <alternativeName>
        <fullName evidence="1">Ketol-acid reductoisomerase type I</fullName>
    </alternativeName>
</protein>
<evidence type="ECO:0000255" key="1">
    <source>
        <dbReference type="HAMAP-Rule" id="MF_00435"/>
    </source>
</evidence>
<evidence type="ECO:0000255" key="2">
    <source>
        <dbReference type="PROSITE-ProRule" id="PRU01197"/>
    </source>
</evidence>
<evidence type="ECO:0000255" key="3">
    <source>
        <dbReference type="PROSITE-ProRule" id="PRU01198"/>
    </source>
</evidence>
<gene>
    <name evidence="1" type="primary">ilvC</name>
    <name type="ordered locus">Pden_1760</name>
</gene>
<feature type="chain" id="PRO_1000050549" description="Ketol-acid reductoisomerase (NADP(+))">
    <location>
        <begin position="1"/>
        <end position="340"/>
    </location>
</feature>
<feature type="domain" description="KARI N-terminal Rossmann" evidence="2">
    <location>
        <begin position="1"/>
        <end position="182"/>
    </location>
</feature>
<feature type="domain" description="KARI C-terminal knotted" evidence="3">
    <location>
        <begin position="183"/>
        <end position="329"/>
    </location>
</feature>
<feature type="active site" evidence="1">
    <location>
        <position position="108"/>
    </location>
</feature>
<feature type="binding site" evidence="1">
    <location>
        <begin position="24"/>
        <end position="27"/>
    </location>
    <ligand>
        <name>NADP(+)</name>
        <dbReference type="ChEBI" id="CHEBI:58349"/>
    </ligand>
</feature>
<feature type="binding site" evidence="1">
    <location>
        <position position="48"/>
    </location>
    <ligand>
        <name>NADP(+)</name>
        <dbReference type="ChEBI" id="CHEBI:58349"/>
    </ligand>
</feature>
<feature type="binding site" evidence="1">
    <location>
        <position position="51"/>
    </location>
    <ligand>
        <name>NADP(+)</name>
        <dbReference type="ChEBI" id="CHEBI:58349"/>
    </ligand>
</feature>
<feature type="binding site" evidence="1">
    <location>
        <position position="53"/>
    </location>
    <ligand>
        <name>NADP(+)</name>
        <dbReference type="ChEBI" id="CHEBI:58349"/>
    </ligand>
</feature>
<feature type="binding site" evidence="1">
    <location>
        <begin position="83"/>
        <end position="86"/>
    </location>
    <ligand>
        <name>NADP(+)</name>
        <dbReference type="ChEBI" id="CHEBI:58349"/>
    </ligand>
</feature>
<feature type="binding site" evidence="1">
    <location>
        <position position="134"/>
    </location>
    <ligand>
        <name>NADP(+)</name>
        <dbReference type="ChEBI" id="CHEBI:58349"/>
    </ligand>
</feature>
<feature type="binding site" evidence="1">
    <location>
        <position position="191"/>
    </location>
    <ligand>
        <name>Mg(2+)</name>
        <dbReference type="ChEBI" id="CHEBI:18420"/>
        <label>1</label>
    </ligand>
</feature>
<feature type="binding site" evidence="1">
    <location>
        <position position="191"/>
    </location>
    <ligand>
        <name>Mg(2+)</name>
        <dbReference type="ChEBI" id="CHEBI:18420"/>
        <label>2</label>
    </ligand>
</feature>
<feature type="binding site" evidence="1">
    <location>
        <position position="195"/>
    </location>
    <ligand>
        <name>Mg(2+)</name>
        <dbReference type="ChEBI" id="CHEBI:18420"/>
        <label>1</label>
    </ligand>
</feature>
<feature type="binding site" evidence="1">
    <location>
        <position position="227"/>
    </location>
    <ligand>
        <name>Mg(2+)</name>
        <dbReference type="ChEBI" id="CHEBI:18420"/>
        <label>2</label>
    </ligand>
</feature>
<feature type="binding site" evidence="1">
    <location>
        <position position="231"/>
    </location>
    <ligand>
        <name>Mg(2+)</name>
        <dbReference type="ChEBI" id="CHEBI:18420"/>
        <label>2</label>
    </ligand>
</feature>
<feature type="binding site" evidence="1">
    <location>
        <position position="252"/>
    </location>
    <ligand>
        <name>substrate</name>
    </ligand>
</feature>
<keyword id="KW-0028">Amino-acid biosynthesis</keyword>
<keyword id="KW-0100">Branched-chain amino acid biosynthesis</keyword>
<keyword id="KW-0460">Magnesium</keyword>
<keyword id="KW-0479">Metal-binding</keyword>
<keyword id="KW-0521">NADP</keyword>
<keyword id="KW-0560">Oxidoreductase</keyword>
<keyword id="KW-1185">Reference proteome</keyword>
<accession>A1B2W3</accession>
<proteinExistence type="inferred from homology"/>
<reference key="1">
    <citation type="submission" date="2006-12" db="EMBL/GenBank/DDBJ databases">
        <title>Complete sequence of chromosome 1 of Paracoccus denitrificans PD1222.</title>
        <authorList>
            <person name="Copeland A."/>
            <person name="Lucas S."/>
            <person name="Lapidus A."/>
            <person name="Barry K."/>
            <person name="Detter J.C."/>
            <person name="Glavina del Rio T."/>
            <person name="Hammon N."/>
            <person name="Israni S."/>
            <person name="Dalin E."/>
            <person name="Tice H."/>
            <person name="Pitluck S."/>
            <person name="Munk A.C."/>
            <person name="Brettin T."/>
            <person name="Bruce D."/>
            <person name="Han C."/>
            <person name="Tapia R."/>
            <person name="Gilna P."/>
            <person name="Schmutz J."/>
            <person name="Larimer F."/>
            <person name="Land M."/>
            <person name="Hauser L."/>
            <person name="Kyrpides N."/>
            <person name="Lykidis A."/>
            <person name="Spiro S."/>
            <person name="Richardson D.J."/>
            <person name="Moir J.W.B."/>
            <person name="Ferguson S.J."/>
            <person name="van Spanning R.J.M."/>
            <person name="Richardson P."/>
        </authorList>
    </citation>
    <scope>NUCLEOTIDE SEQUENCE [LARGE SCALE GENOMIC DNA]</scope>
    <source>
        <strain>Pd 1222</strain>
    </source>
</reference>
<dbReference type="EC" id="1.1.1.86" evidence="1"/>
<dbReference type="EMBL" id="CP000489">
    <property type="protein sequence ID" value="ABL69857.1"/>
    <property type="molecule type" value="Genomic_DNA"/>
</dbReference>
<dbReference type="RefSeq" id="WP_011748055.1">
    <property type="nucleotide sequence ID" value="NC_008686.1"/>
</dbReference>
<dbReference type="SMR" id="A1B2W3"/>
<dbReference type="STRING" id="318586.Pden_1760"/>
<dbReference type="EnsemblBacteria" id="ABL69857">
    <property type="protein sequence ID" value="ABL69857"/>
    <property type="gene ID" value="Pden_1760"/>
</dbReference>
<dbReference type="GeneID" id="93450152"/>
<dbReference type="KEGG" id="pde:Pden_1760"/>
<dbReference type="eggNOG" id="COG0059">
    <property type="taxonomic scope" value="Bacteria"/>
</dbReference>
<dbReference type="HOGENOM" id="CLU_033821_0_1_5"/>
<dbReference type="OrthoDB" id="9804088at2"/>
<dbReference type="UniPathway" id="UPA00047">
    <property type="reaction ID" value="UER00056"/>
</dbReference>
<dbReference type="UniPathway" id="UPA00049">
    <property type="reaction ID" value="UER00060"/>
</dbReference>
<dbReference type="Proteomes" id="UP000000361">
    <property type="component" value="Chromosome 1"/>
</dbReference>
<dbReference type="GO" id="GO:0005829">
    <property type="term" value="C:cytosol"/>
    <property type="evidence" value="ECO:0007669"/>
    <property type="project" value="TreeGrafter"/>
</dbReference>
<dbReference type="GO" id="GO:0004455">
    <property type="term" value="F:ketol-acid reductoisomerase activity"/>
    <property type="evidence" value="ECO:0007669"/>
    <property type="project" value="UniProtKB-UniRule"/>
</dbReference>
<dbReference type="GO" id="GO:0000287">
    <property type="term" value="F:magnesium ion binding"/>
    <property type="evidence" value="ECO:0007669"/>
    <property type="project" value="UniProtKB-UniRule"/>
</dbReference>
<dbReference type="GO" id="GO:0050661">
    <property type="term" value="F:NADP binding"/>
    <property type="evidence" value="ECO:0007669"/>
    <property type="project" value="InterPro"/>
</dbReference>
<dbReference type="GO" id="GO:0009097">
    <property type="term" value="P:isoleucine biosynthetic process"/>
    <property type="evidence" value="ECO:0007669"/>
    <property type="project" value="UniProtKB-UniRule"/>
</dbReference>
<dbReference type="GO" id="GO:0009099">
    <property type="term" value="P:L-valine biosynthetic process"/>
    <property type="evidence" value="ECO:0007669"/>
    <property type="project" value="UniProtKB-UniRule"/>
</dbReference>
<dbReference type="FunFam" id="3.40.50.720:FF:000023">
    <property type="entry name" value="Ketol-acid reductoisomerase (NADP(+))"/>
    <property type="match status" value="1"/>
</dbReference>
<dbReference type="Gene3D" id="6.10.240.10">
    <property type="match status" value="1"/>
</dbReference>
<dbReference type="Gene3D" id="3.40.50.720">
    <property type="entry name" value="NAD(P)-binding Rossmann-like Domain"/>
    <property type="match status" value="1"/>
</dbReference>
<dbReference type="HAMAP" id="MF_00435">
    <property type="entry name" value="IlvC"/>
    <property type="match status" value="1"/>
</dbReference>
<dbReference type="InterPro" id="IPR008927">
    <property type="entry name" value="6-PGluconate_DH-like_C_sf"/>
</dbReference>
<dbReference type="InterPro" id="IPR013023">
    <property type="entry name" value="KARI"/>
</dbReference>
<dbReference type="InterPro" id="IPR000506">
    <property type="entry name" value="KARI_C"/>
</dbReference>
<dbReference type="InterPro" id="IPR013116">
    <property type="entry name" value="KARI_N"/>
</dbReference>
<dbReference type="InterPro" id="IPR014359">
    <property type="entry name" value="KARI_prok"/>
</dbReference>
<dbReference type="InterPro" id="IPR036291">
    <property type="entry name" value="NAD(P)-bd_dom_sf"/>
</dbReference>
<dbReference type="NCBIfam" id="TIGR00465">
    <property type="entry name" value="ilvC"/>
    <property type="match status" value="1"/>
</dbReference>
<dbReference type="NCBIfam" id="NF004017">
    <property type="entry name" value="PRK05479.1"/>
    <property type="match status" value="1"/>
</dbReference>
<dbReference type="NCBIfam" id="NF009940">
    <property type="entry name" value="PRK13403.1"/>
    <property type="match status" value="1"/>
</dbReference>
<dbReference type="PANTHER" id="PTHR21371">
    <property type="entry name" value="KETOL-ACID REDUCTOISOMERASE, MITOCHONDRIAL"/>
    <property type="match status" value="1"/>
</dbReference>
<dbReference type="PANTHER" id="PTHR21371:SF1">
    <property type="entry name" value="KETOL-ACID REDUCTOISOMERASE, MITOCHONDRIAL"/>
    <property type="match status" value="1"/>
</dbReference>
<dbReference type="Pfam" id="PF01450">
    <property type="entry name" value="KARI_C"/>
    <property type="match status" value="1"/>
</dbReference>
<dbReference type="Pfam" id="PF07991">
    <property type="entry name" value="KARI_N"/>
    <property type="match status" value="1"/>
</dbReference>
<dbReference type="PIRSF" id="PIRSF000116">
    <property type="entry name" value="IlvC_gammaproteo"/>
    <property type="match status" value="1"/>
</dbReference>
<dbReference type="SUPFAM" id="SSF48179">
    <property type="entry name" value="6-phosphogluconate dehydrogenase C-terminal domain-like"/>
    <property type="match status" value="1"/>
</dbReference>
<dbReference type="SUPFAM" id="SSF51735">
    <property type="entry name" value="NAD(P)-binding Rossmann-fold domains"/>
    <property type="match status" value="1"/>
</dbReference>
<dbReference type="PROSITE" id="PS51851">
    <property type="entry name" value="KARI_C"/>
    <property type="match status" value="1"/>
</dbReference>
<dbReference type="PROSITE" id="PS51850">
    <property type="entry name" value="KARI_N"/>
    <property type="match status" value="1"/>
</dbReference>
<comment type="function">
    <text evidence="1">Involved in the biosynthesis of branched-chain amino acids (BCAA). Catalyzes an alkyl-migration followed by a ketol-acid reduction of (S)-2-acetolactate (S2AL) to yield (R)-2,3-dihydroxy-isovalerate. In the isomerase reaction, S2AL is rearranged via a Mg-dependent methyl migration to produce 3-hydroxy-3-methyl-2-ketobutyrate (HMKB). In the reductase reaction, this 2-ketoacid undergoes a metal-dependent reduction by NADPH to yield (R)-2,3-dihydroxy-isovalerate.</text>
</comment>
<comment type="catalytic activity">
    <reaction evidence="1">
        <text>(2R)-2,3-dihydroxy-3-methylbutanoate + NADP(+) = (2S)-2-acetolactate + NADPH + H(+)</text>
        <dbReference type="Rhea" id="RHEA:22068"/>
        <dbReference type="ChEBI" id="CHEBI:15378"/>
        <dbReference type="ChEBI" id="CHEBI:49072"/>
        <dbReference type="ChEBI" id="CHEBI:57783"/>
        <dbReference type="ChEBI" id="CHEBI:58349"/>
        <dbReference type="ChEBI" id="CHEBI:58476"/>
        <dbReference type="EC" id="1.1.1.86"/>
    </reaction>
</comment>
<comment type="catalytic activity">
    <reaction evidence="1">
        <text>(2R,3R)-2,3-dihydroxy-3-methylpentanoate + NADP(+) = (S)-2-ethyl-2-hydroxy-3-oxobutanoate + NADPH + H(+)</text>
        <dbReference type="Rhea" id="RHEA:13493"/>
        <dbReference type="ChEBI" id="CHEBI:15378"/>
        <dbReference type="ChEBI" id="CHEBI:49256"/>
        <dbReference type="ChEBI" id="CHEBI:49258"/>
        <dbReference type="ChEBI" id="CHEBI:57783"/>
        <dbReference type="ChEBI" id="CHEBI:58349"/>
        <dbReference type="EC" id="1.1.1.86"/>
    </reaction>
</comment>
<comment type="cofactor">
    <cofactor evidence="1">
        <name>Mg(2+)</name>
        <dbReference type="ChEBI" id="CHEBI:18420"/>
    </cofactor>
    <text evidence="1">Binds 2 magnesium ions per subunit.</text>
</comment>
<comment type="pathway">
    <text evidence="1">Amino-acid biosynthesis; L-isoleucine biosynthesis; L-isoleucine from 2-oxobutanoate: step 2/4.</text>
</comment>
<comment type="pathway">
    <text evidence="1">Amino-acid biosynthesis; L-valine biosynthesis; L-valine from pyruvate: step 2/4.</text>
</comment>
<comment type="similarity">
    <text evidence="1">Belongs to the ketol-acid reductoisomerase family.</text>
</comment>